<dbReference type="EC" id="6.1.1.14" evidence="1"/>
<dbReference type="EMBL" id="AE015927">
    <property type="protein sequence ID" value="AAO34860.1"/>
    <property type="molecule type" value="Genomic_DNA"/>
</dbReference>
<dbReference type="RefSeq" id="WP_011098530.1">
    <property type="nucleotide sequence ID" value="NC_004557.1"/>
</dbReference>
<dbReference type="SMR" id="Q899G6"/>
<dbReference type="STRING" id="212717.CTC_00212"/>
<dbReference type="GeneID" id="24255031"/>
<dbReference type="KEGG" id="ctc:CTC_00212"/>
<dbReference type="HOGENOM" id="CLU_015515_2_1_9"/>
<dbReference type="OrthoDB" id="9760853at2"/>
<dbReference type="Proteomes" id="UP000001412">
    <property type="component" value="Chromosome"/>
</dbReference>
<dbReference type="GO" id="GO:0005737">
    <property type="term" value="C:cytoplasm"/>
    <property type="evidence" value="ECO:0007669"/>
    <property type="project" value="UniProtKB-SubCell"/>
</dbReference>
<dbReference type="GO" id="GO:0005524">
    <property type="term" value="F:ATP binding"/>
    <property type="evidence" value="ECO:0007669"/>
    <property type="project" value="UniProtKB-UniRule"/>
</dbReference>
<dbReference type="GO" id="GO:0140096">
    <property type="term" value="F:catalytic activity, acting on a protein"/>
    <property type="evidence" value="ECO:0007669"/>
    <property type="project" value="UniProtKB-ARBA"/>
</dbReference>
<dbReference type="GO" id="GO:0004820">
    <property type="term" value="F:glycine-tRNA ligase activity"/>
    <property type="evidence" value="ECO:0000250"/>
    <property type="project" value="UniProtKB"/>
</dbReference>
<dbReference type="GO" id="GO:0046983">
    <property type="term" value="F:protein dimerization activity"/>
    <property type="evidence" value="ECO:0000250"/>
    <property type="project" value="UniProtKB"/>
</dbReference>
<dbReference type="GO" id="GO:0016740">
    <property type="term" value="F:transferase activity"/>
    <property type="evidence" value="ECO:0007669"/>
    <property type="project" value="UniProtKB-ARBA"/>
</dbReference>
<dbReference type="GO" id="GO:0006426">
    <property type="term" value="P:glycyl-tRNA aminoacylation"/>
    <property type="evidence" value="ECO:0007669"/>
    <property type="project" value="UniProtKB-UniRule"/>
</dbReference>
<dbReference type="CDD" id="cd00774">
    <property type="entry name" value="GlyRS-like_core"/>
    <property type="match status" value="1"/>
</dbReference>
<dbReference type="CDD" id="cd00858">
    <property type="entry name" value="GlyRS_anticodon"/>
    <property type="match status" value="1"/>
</dbReference>
<dbReference type="FunFam" id="3.40.50.800:FF:000002">
    <property type="entry name" value="Glycine--tRNA ligase"/>
    <property type="match status" value="1"/>
</dbReference>
<dbReference type="Gene3D" id="3.40.50.800">
    <property type="entry name" value="Anticodon-binding domain"/>
    <property type="match status" value="1"/>
</dbReference>
<dbReference type="Gene3D" id="3.30.930.10">
    <property type="entry name" value="Bira Bifunctional Protein, Domain 2"/>
    <property type="match status" value="1"/>
</dbReference>
<dbReference type="HAMAP" id="MF_00253_B">
    <property type="entry name" value="Gly_tRNA_synth_B"/>
    <property type="match status" value="1"/>
</dbReference>
<dbReference type="InterPro" id="IPR002314">
    <property type="entry name" value="aa-tRNA-synt_IIb"/>
</dbReference>
<dbReference type="InterPro" id="IPR006195">
    <property type="entry name" value="aa-tRNA-synth_II"/>
</dbReference>
<dbReference type="InterPro" id="IPR045864">
    <property type="entry name" value="aa-tRNA-synth_II/BPL/LPL"/>
</dbReference>
<dbReference type="InterPro" id="IPR004154">
    <property type="entry name" value="Anticodon-bd"/>
</dbReference>
<dbReference type="InterPro" id="IPR036621">
    <property type="entry name" value="Anticodon-bd_dom_sf"/>
</dbReference>
<dbReference type="InterPro" id="IPR027031">
    <property type="entry name" value="Gly-tRNA_synthase/POLG2"/>
</dbReference>
<dbReference type="InterPro" id="IPR022961">
    <property type="entry name" value="Gly_tRNA_ligase_bac"/>
</dbReference>
<dbReference type="InterPro" id="IPR033731">
    <property type="entry name" value="GlyRS-like_core"/>
</dbReference>
<dbReference type="InterPro" id="IPR002315">
    <property type="entry name" value="tRNA-synt_gly"/>
</dbReference>
<dbReference type="NCBIfam" id="TIGR00389">
    <property type="entry name" value="glyS_dimeric"/>
    <property type="match status" value="1"/>
</dbReference>
<dbReference type="NCBIfam" id="NF003211">
    <property type="entry name" value="PRK04173.1"/>
    <property type="match status" value="1"/>
</dbReference>
<dbReference type="PANTHER" id="PTHR10745:SF8">
    <property type="entry name" value="DNA POLYMERASE SUBUNIT GAMMA-2, MITOCHONDRIAL"/>
    <property type="match status" value="1"/>
</dbReference>
<dbReference type="PANTHER" id="PTHR10745">
    <property type="entry name" value="GLYCYL-TRNA SYNTHETASE/DNA POLYMERASE SUBUNIT GAMMA-2"/>
    <property type="match status" value="1"/>
</dbReference>
<dbReference type="Pfam" id="PF03129">
    <property type="entry name" value="HGTP_anticodon"/>
    <property type="match status" value="1"/>
</dbReference>
<dbReference type="Pfam" id="PF00587">
    <property type="entry name" value="tRNA-synt_2b"/>
    <property type="match status" value="1"/>
</dbReference>
<dbReference type="PRINTS" id="PR01043">
    <property type="entry name" value="TRNASYNTHGLY"/>
</dbReference>
<dbReference type="SUPFAM" id="SSF52954">
    <property type="entry name" value="Class II aaRS ABD-related"/>
    <property type="match status" value="1"/>
</dbReference>
<dbReference type="SUPFAM" id="SSF55681">
    <property type="entry name" value="Class II aaRS and biotin synthetases"/>
    <property type="match status" value="1"/>
</dbReference>
<dbReference type="PROSITE" id="PS50862">
    <property type="entry name" value="AA_TRNA_LIGASE_II"/>
    <property type="match status" value="1"/>
</dbReference>
<reference key="1">
    <citation type="journal article" date="2003" name="Proc. Natl. Acad. Sci. U.S.A.">
        <title>The genome sequence of Clostridium tetani, the causative agent of tetanus disease.</title>
        <authorList>
            <person name="Brueggemann H."/>
            <person name="Baeumer S."/>
            <person name="Fricke W.F."/>
            <person name="Wiezer A."/>
            <person name="Liesegang H."/>
            <person name="Decker I."/>
            <person name="Herzberg C."/>
            <person name="Martinez-Arias R."/>
            <person name="Merkl R."/>
            <person name="Henne A."/>
            <person name="Gottschalk G."/>
        </authorList>
    </citation>
    <scope>NUCLEOTIDE SEQUENCE [LARGE SCALE GENOMIC DNA]</scope>
    <source>
        <strain>Massachusetts / E88</strain>
    </source>
</reference>
<gene>
    <name evidence="1" type="primary">glyQS</name>
    <name type="ordered locus">CTC_00212</name>
</gene>
<keyword id="KW-0030">Aminoacyl-tRNA synthetase</keyword>
<keyword id="KW-0067">ATP-binding</keyword>
<keyword id="KW-0963">Cytoplasm</keyword>
<keyword id="KW-0436">Ligase</keyword>
<keyword id="KW-0547">Nucleotide-binding</keyword>
<keyword id="KW-0648">Protein biosynthesis</keyword>
<keyword id="KW-1185">Reference proteome</keyword>
<protein>
    <recommendedName>
        <fullName evidence="1">Glycine--tRNA ligase</fullName>
        <ecNumber evidence="1">6.1.1.14</ecNumber>
    </recommendedName>
    <alternativeName>
        <fullName evidence="1">Glycyl-tRNA synthetase</fullName>
        <shortName evidence="1">GlyRS</shortName>
    </alternativeName>
</protein>
<comment type="function">
    <text evidence="1">Catalyzes the attachment of glycine to tRNA(Gly).</text>
</comment>
<comment type="catalytic activity">
    <reaction evidence="1">
        <text>tRNA(Gly) + glycine + ATP = glycyl-tRNA(Gly) + AMP + diphosphate</text>
        <dbReference type="Rhea" id="RHEA:16013"/>
        <dbReference type="Rhea" id="RHEA-COMP:9664"/>
        <dbReference type="Rhea" id="RHEA-COMP:9683"/>
        <dbReference type="ChEBI" id="CHEBI:30616"/>
        <dbReference type="ChEBI" id="CHEBI:33019"/>
        <dbReference type="ChEBI" id="CHEBI:57305"/>
        <dbReference type="ChEBI" id="CHEBI:78442"/>
        <dbReference type="ChEBI" id="CHEBI:78522"/>
        <dbReference type="ChEBI" id="CHEBI:456215"/>
        <dbReference type="EC" id="6.1.1.14"/>
    </reaction>
</comment>
<comment type="subunit">
    <text evidence="1">Homodimer.</text>
</comment>
<comment type="subcellular location">
    <subcellularLocation>
        <location evidence="1">Cytoplasm</location>
    </subcellularLocation>
</comment>
<comment type="similarity">
    <text evidence="1">Belongs to the class-II aminoacyl-tRNA synthetase family.</text>
</comment>
<feature type="chain" id="PRO_0000072954" description="Glycine--tRNA ligase">
    <location>
        <begin position="1"/>
        <end position="463"/>
    </location>
</feature>
<feature type="binding site" evidence="1">
    <location>
        <position position="100"/>
    </location>
    <ligand>
        <name>substrate</name>
    </ligand>
</feature>
<feature type="binding site" evidence="1">
    <location>
        <position position="175"/>
    </location>
    <ligand>
        <name>substrate</name>
    </ligand>
</feature>
<feature type="binding site" evidence="1">
    <location>
        <begin position="207"/>
        <end position="209"/>
    </location>
    <ligand>
        <name>ATP</name>
        <dbReference type="ChEBI" id="CHEBI:30616"/>
    </ligand>
</feature>
<feature type="binding site" evidence="1">
    <location>
        <begin position="217"/>
        <end position="222"/>
    </location>
    <ligand>
        <name>ATP</name>
        <dbReference type="ChEBI" id="CHEBI:30616"/>
    </ligand>
</feature>
<feature type="binding site" evidence="1">
    <location>
        <begin position="222"/>
        <end position="226"/>
    </location>
    <ligand>
        <name>substrate</name>
    </ligand>
</feature>
<feature type="binding site" evidence="1">
    <location>
        <begin position="291"/>
        <end position="292"/>
    </location>
    <ligand>
        <name>ATP</name>
        <dbReference type="ChEBI" id="CHEBI:30616"/>
    </ligand>
</feature>
<feature type="binding site" evidence="1">
    <location>
        <begin position="331"/>
        <end position="335"/>
    </location>
    <ligand>
        <name>substrate</name>
    </ligand>
</feature>
<feature type="binding site" evidence="1">
    <location>
        <begin position="335"/>
        <end position="338"/>
    </location>
    <ligand>
        <name>ATP</name>
        <dbReference type="ChEBI" id="CHEBI:30616"/>
    </ligand>
</feature>
<sequence>MTVEKTMDKIVALAKNRGFIFPGSEIYGGLANSWDYGPLGVEFKNNVKKAWWKKFVQESPYNVGIDAAILMNREVWVASGHVGGFSDPLMDCKECKARCRADKLIEDYMQDKDENFESADGWSNEQLKDFIDKNNIACPKCGEHNFTDVRKFNLMFKTFQGVTEDAQSEIFLRPETAQGIFVNFKNAIRTTRRKMPFGMAQIGKSFRNEITPGNFTFRTREFEQMELEFFCKPGTDLEWFEYWRDYSWNFLLSLGLAKDNLRIREHAKEELAFYSKATVDIEYLFPFGWGELWGIADRTDYDLKQHMNHSGKDLTYLDPETNEKYLPYCIEPSLGADRVALAFLVDAYDEEELDGGDSRTVLRLHPALAPFKAAILPLTKKLKDKSLEVYSMLSKYFNVDYDEAGTIGKRYRREDEIGTPYCITIDYDTLEDNTVTIRDRDSMDQIRINIDELVKYISEKVEF</sequence>
<evidence type="ECO:0000255" key="1">
    <source>
        <dbReference type="HAMAP-Rule" id="MF_00253"/>
    </source>
</evidence>
<name>SYG_CLOTE</name>
<proteinExistence type="inferred from homology"/>
<organism>
    <name type="scientific">Clostridium tetani (strain Massachusetts / E88)</name>
    <dbReference type="NCBI Taxonomy" id="212717"/>
    <lineage>
        <taxon>Bacteria</taxon>
        <taxon>Bacillati</taxon>
        <taxon>Bacillota</taxon>
        <taxon>Clostridia</taxon>
        <taxon>Eubacteriales</taxon>
        <taxon>Clostridiaceae</taxon>
        <taxon>Clostridium</taxon>
    </lineage>
</organism>
<accession>Q899G6</accession>